<protein>
    <recommendedName>
        <fullName>Matrix metalloproteinase-26</fullName>
        <shortName>MMP-26</shortName>
        <ecNumber>3.4.24.-</ecNumber>
    </recommendedName>
    <alternativeName>
        <fullName>Endometase</fullName>
    </alternativeName>
    <alternativeName>
        <fullName>Matrilysin-2</fullName>
    </alternativeName>
</protein>
<keyword id="KW-0106">Calcium</keyword>
<keyword id="KW-0177">Collagen degradation</keyword>
<keyword id="KW-0272">Extracellular matrix</keyword>
<keyword id="KW-0325">Glycoprotein</keyword>
<keyword id="KW-0378">Hydrolase</keyword>
<keyword id="KW-0479">Metal-binding</keyword>
<keyword id="KW-0482">Metalloprotease</keyword>
<keyword id="KW-0645">Protease</keyword>
<keyword id="KW-1267">Proteomics identification</keyword>
<keyword id="KW-1185">Reference proteome</keyword>
<keyword id="KW-0964">Secreted</keyword>
<keyword id="KW-0732">Signal</keyword>
<keyword id="KW-0862">Zinc</keyword>
<keyword id="KW-0865">Zymogen</keyword>
<gene>
    <name type="primary">MMP26</name>
</gene>
<evidence type="ECO:0000250" key="1"/>
<evidence type="ECO:0000255" key="2"/>
<evidence type="ECO:0000255" key="3">
    <source>
        <dbReference type="PROSITE-ProRule" id="PRU10095"/>
    </source>
</evidence>
<evidence type="ECO:0000269" key="4">
    <source>
    </source>
</evidence>
<evidence type="ECO:0000269" key="5">
    <source>
    </source>
</evidence>
<evidence type="ECO:0000305" key="6"/>
<dbReference type="EC" id="3.4.24.-"/>
<dbReference type="EMBL" id="AF230354">
    <property type="protein sequence ID" value="AAF80180.1"/>
    <property type="molecule type" value="mRNA"/>
</dbReference>
<dbReference type="EMBL" id="AJ251531">
    <property type="protein sequence ID" value="CAC08821.1"/>
    <property type="molecule type" value="mRNA"/>
</dbReference>
<dbReference type="EMBL" id="AF248646">
    <property type="protein sequence ID" value="AAF82359.1"/>
    <property type="molecule type" value="mRNA"/>
</dbReference>
<dbReference type="EMBL" id="AF291664">
    <property type="protein sequence ID" value="AAG00603.1"/>
    <property type="molecule type" value="mRNA"/>
</dbReference>
<dbReference type="EMBL" id="AF291665">
    <property type="protein sequence ID" value="AAG02470.1"/>
    <property type="molecule type" value="Genomic_DNA"/>
</dbReference>
<dbReference type="EMBL" id="BC101541">
    <property type="protein sequence ID" value="AAI01542.1"/>
    <property type="molecule type" value="mRNA"/>
</dbReference>
<dbReference type="EMBL" id="BC101543">
    <property type="protein sequence ID" value="AAI01544.1"/>
    <property type="molecule type" value="mRNA"/>
</dbReference>
<dbReference type="CCDS" id="CCDS7752.1"/>
<dbReference type="RefSeq" id="NP_068573.2">
    <property type="nucleotide sequence ID" value="NM_021801.5"/>
</dbReference>
<dbReference type="SMR" id="Q9NRE1"/>
<dbReference type="BioGRID" id="121151">
    <property type="interactions" value="89"/>
</dbReference>
<dbReference type="FunCoup" id="Q9NRE1">
    <property type="interactions" value="14"/>
</dbReference>
<dbReference type="IntAct" id="Q9NRE1">
    <property type="interactions" value="19"/>
</dbReference>
<dbReference type="STRING" id="9606.ENSP00000369753"/>
<dbReference type="BindingDB" id="Q9NRE1"/>
<dbReference type="ChEMBL" id="CHEMBL4707"/>
<dbReference type="DrugBank" id="DB00786">
    <property type="generic name" value="Marimastat"/>
</dbReference>
<dbReference type="GuidetoPHARMACOLOGY" id="1648"/>
<dbReference type="MEROPS" id="M10.029"/>
<dbReference type="GlyCosmos" id="Q9NRE1">
    <property type="glycosylation" value="2 sites, No reported glycans"/>
</dbReference>
<dbReference type="GlyGen" id="Q9NRE1">
    <property type="glycosylation" value="2 sites"/>
</dbReference>
<dbReference type="iPTMnet" id="Q9NRE1"/>
<dbReference type="PhosphoSitePlus" id="Q9NRE1"/>
<dbReference type="BioMuta" id="MMP26"/>
<dbReference type="DMDM" id="13629493"/>
<dbReference type="MassIVE" id="Q9NRE1"/>
<dbReference type="PaxDb" id="9606-ENSP00000369753"/>
<dbReference type="PeptideAtlas" id="Q9NRE1"/>
<dbReference type="ProteomicsDB" id="82343"/>
<dbReference type="Antibodypedia" id="10919">
    <property type="antibodies" value="193 antibodies from 30 providers"/>
</dbReference>
<dbReference type="DNASU" id="56547"/>
<dbReference type="Ensembl" id="ENST00000380390.6">
    <property type="protein sequence ID" value="ENSP00000369753.1"/>
    <property type="gene ID" value="ENSG00000167346.9"/>
</dbReference>
<dbReference type="Ensembl" id="ENST00000690848.1">
    <property type="protein sequence ID" value="ENSP00000510347.1"/>
    <property type="gene ID" value="ENSG00000167346.9"/>
</dbReference>
<dbReference type="GeneID" id="56547"/>
<dbReference type="KEGG" id="hsa:56547"/>
<dbReference type="MANE-Select" id="ENST00000380390.6">
    <property type="protein sequence ID" value="ENSP00000369753.1"/>
    <property type="RefSeq nucleotide sequence ID" value="NM_021801.5"/>
    <property type="RefSeq protein sequence ID" value="NP_068573.2"/>
</dbReference>
<dbReference type="UCSC" id="uc001lzv.4">
    <property type="organism name" value="human"/>
</dbReference>
<dbReference type="AGR" id="HGNC:14249"/>
<dbReference type="CTD" id="56547"/>
<dbReference type="DisGeNET" id="56547"/>
<dbReference type="GeneCards" id="MMP26"/>
<dbReference type="HGNC" id="HGNC:14249">
    <property type="gene designation" value="MMP26"/>
</dbReference>
<dbReference type="HPA" id="ENSG00000167346">
    <property type="expression patterns" value="Tissue enriched (endometrium)"/>
</dbReference>
<dbReference type="MIM" id="605470">
    <property type="type" value="gene"/>
</dbReference>
<dbReference type="neXtProt" id="NX_Q9NRE1"/>
<dbReference type="OpenTargets" id="ENSG00000167346"/>
<dbReference type="PharmGKB" id="PA30883"/>
<dbReference type="VEuPathDB" id="HostDB:ENSG00000167346"/>
<dbReference type="eggNOG" id="KOG1565">
    <property type="taxonomic scope" value="Eukaryota"/>
</dbReference>
<dbReference type="GeneTree" id="ENSGT00940000163719"/>
<dbReference type="HOGENOM" id="CLU_015489_4_1_1"/>
<dbReference type="InParanoid" id="Q9NRE1"/>
<dbReference type="OMA" id="FLPWCFT"/>
<dbReference type="OrthoDB" id="406838at2759"/>
<dbReference type="PAN-GO" id="Q9NRE1">
    <property type="GO annotations" value="3 GO annotations based on evolutionary models"/>
</dbReference>
<dbReference type="PhylomeDB" id="Q9NRE1"/>
<dbReference type="TreeFam" id="TF315428"/>
<dbReference type="BRENDA" id="3.4.24.B7">
    <property type="organism ID" value="2681"/>
</dbReference>
<dbReference type="PathwayCommons" id="Q9NRE1"/>
<dbReference type="SignaLink" id="Q9NRE1"/>
<dbReference type="SIGNOR" id="Q9NRE1"/>
<dbReference type="BioGRID-ORCS" id="56547">
    <property type="hits" value="12 hits in 1152 CRISPR screens"/>
</dbReference>
<dbReference type="GeneWiki" id="MMP26"/>
<dbReference type="GenomeRNAi" id="56547"/>
<dbReference type="Pharos" id="Q9NRE1">
    <property type="development level" value="Tchem"/>
</dbReference>
<dbReference type="PRO" id="PR:Q9NRE1"/>
<dbReference type="Proteomes" id="UP000005640">
    <property type="component" value="Chromosome 11"/>
</dbReference>
<dbReference type="RNAct" id="Q9NRE1">
    <property type="molecule type" value="protein"/>
</dbReference>
<dbReference type="Bgee" id="ENSG00000167346">
    <property type="expression patterns" value="Expressed in buccal mucosa cell and 32 other cell types or tissues"/>
</dbReference>
<dbReference type="GO" id="GO:0031012">
    <property type="term" value="C:extracellular matrix"/>
    <property type="evidence" value="ECO:0000303"/>
    <property type="project" value="UniProtKB"/>
</dbReference>
<dbReference type="GO" id="GO:0005615">
    <property type="term" value="C:extracellular space"/>
    <property type="evidence" value="ECO:0000318"/>
    <property type="project" value="GO_Central"/>
</dbReference>
<dbReference type="GO" id="GO:0004222">
    <property type="term" value="F:metalloendopeptidase activity"/>
    <property type="evidence" value="ECO:0000318"/>
    <property type="project" value="GO_Central"/>
</dbReference>
<dbReference type="GO" id="GO:0008270">
    <property type="term" value="F:zinc ion binding"/>
    <property type="evidence" value="ECO:0007669"/>
    <property type="project" value="InterPro"/>
</dbReference>
<dbReference type="GO" id="GO:0030574">
    <property type="term" value="P:collagen catabolic process"/>
    <property type="evidence" value="ECO:0000318"/>
    <property type="project" value="GO_Central"/>
</dbReference>
<dbReference type="GO" id="GO:0030198">
    <property type="term" value="P:extracellular matrix organization"/>
    <property type="evidence" value="ECO:0000318"/>
    <property type="project" value="GO_Central"/>
</dbReference>
<dbReference type="GO" id="GO:0050728">
    <property type="term" value="P:negative regulation of inflammatory response"/>
    <property type="evidence" value="ECO:0000315"/>
    <property type="project" value="CACAO"/>
</dbReference>
<dbReference type="GO" id="GO:0006508">
    <property type="term" value="P:proteolysis"/>
    <property type="evidence" value="ECO:0000303"/>
    <property type="project" value="UniProtKB"/>
</dbReference>
<dbReference type="CDD" id="cd04278">
    <property type="entry name" value="ZnMc_MMP"/>
    <property type="match status" value="1"/>
</dbReference>
<dbReference type="FunFam" id="3.40.390.10:FF:000052">
    <property type="entry name" value="Matrix metallopeptidase 26"/>
    <property type="match status" value="1"/>
</dbReference>
<dbReference type="Gene3D" id="3.40.390.10">
    <property type="entry name" value="Collagenase (Catalytic Domain)"/>
    <property type="match status" value="1"/>
</dbReference>
<dbReference type="InterPro" id="IPR033739">
    <property type="entry name" value="M10A_MMP"/>
</dbReference>
<dbReference type="InterPro" id="IPR024079">
    <property type="entry name" value="MetalloPept_cat_dom_sf"/>
</dbReference>
<dbReference type="InterPro" id="IPR001818">
    <property type="entry name" value="Pept_M10_metallopeptidase"/>
</dbReference>
<dbReference type="InterPro" id="IPR021190">
    <property type="entry name" value="Pept_M10A"/>
</dbReference>
<dbReference type="InterPro" id="IPR006026">
    <property type="entry name" value="Peptidase_Metallo"/>
</dbReference>
<dbReference type="PANTHER" id="PTHR10201">
    <property type="entry name" value="MATRIX METALLOPROTEINASE"/>
    <property type="match status" value="1"/>
</dbReference>
<dbReference type="PANTHER" id="PTHR10201:SF76">
    <property type="entry name" value="MATRIX METALLOPROTEINASE-26"/>
    <property type="match status" value="1"/>
</dbReference>
<dbReference type="Pfam" id="PF00413">
    <property type="entry name" value="Peptidase_M10"/>
    <property type="match status" value="1"/>
</dbReference>
<dbReference type="PRINTS" id="PR00138">
    <property type="entry name" value="MATRIXIN"/>
</dbReference>
<dbReference type="SMART" id="SM00235">
    <property type="entry name" value="ZnMc"/>
    <property type="match status" value="1"/>
</dbReference>
<dbReference type="SUPFAM" id="SSF55486">
    <property type="entry name" value="Metalloproteases ('zincins'), catalytic domain"/>
    <property type="match status" value="1"/>
</dbReference>
<dbReference type="PROSITE" id="PS00142">
    <property type="entry name" value="ZINC_PROTEASE"/>
    <property type="match status" value="1"/>
</dbReference>
<comment type="function">
    <text>May hydrolyze collagen type IV, fibronectin, fibrinogen, beta-casein, type I gelatin and alpha-1 proteinase inhibitor. Is also able to activate progelatinase B.</text>
</comment>
<comment type="cofactor">
    <cofactor evidence="1">
        <name>Zn(2+)</name>
        <dbReference type="ChEBI" id="CHEBI:29105"/>
    </cofactor>
    <text evidence="1">Binds 1 zinc ion per subunit.</text>
</comment>
<comment type="cofactor">
    <cofactor evidence="1">
        <name>Ca(2+)</name>
        <dbReference type="ChEBI" id="CHEBI:29108"/>
    </cofactor>
</comment>
<comment type="subcellular location">
    <subcellularLocation>
        <location>Secreted</location>
        <location>Extracellular space</location>
        <location>Extracellular matrix</location>
    </subcellularLocation>
</comment>
<comment type="tissue specificity">
    <text>Expressed specifically in uterus and placenta. Is also widely expressed in malignant tumors from different sources as well as in diverse tumor cell lines.</text>
</comment>
<comment type="domain">
    <text>The conserved cysteine present in the cysteine-switch motif binds the catalytic zinc ion, thus inhibiting the enzyme. The dissociation of the cysteine from the zinc ion upon the activation-peptide release activates the enzyme.</text>
</comment>
<comment type="similarity">
    <text evidence="6">Belongs to the peptidase M10A family.</text>
</comment>
<comment type="online information" name="Atlas of Genetics and Cytogenetics in Oncology and Haematology">
    <link uri="https://atlasgeneticsoncology.org/gene/41403/MMP26"/>
</comment>
<accession>Q9NRE1</accession>
<accession>Q3MJ78</accession>
<accession>Q9GZS2</accession>
<accession>Q9NR87</accession>
<proteinExistence type="evidence at protein level"/>
<name>MMP26_HUMAN</name>
<feature type="signal peptide" evidence="2">
    <location>
        <begin position="1"/>
        <end position="17"/>
    </location>
</feature>
<feature type="propeptide" id="PRO_0000028855" evidence="1">
    <location>
        <begin position="18"/>
        <end position="89"/>
    </location>
</feature>
<feature type="chain" id="PRO_0000028856" description="Matrix metalloproteinase-26">
    <location>
        <begin position="90"/>
        <end position="261"/>
    </location>
</feature>
<feature type="short sequence motif" description="Cysteine switch" evidence="1">
    <location>
        <begin position="80"/>
        <end position="87"/>
    </location>
</feature>
<feature type="active site" evidence="3">
    <location>
        <position position="209"/>
    </location>
</feature>
<feature type="binding site" description="in inhibited form" evidence="1">
    <location>
        <position position="82"/>
    </location>
    <ligand>
        <name>Zn(2+)</name>
        <dbReference type="ChEBI" id="CHEBI:29105"/>
        <note>catalytic</note>
    </ligand>
</feature>
<feature type="binding site" evidence="3">
    <location>
        <position position="208"/>
    </location>
    <ligand>
        <name>Zn(2+)</name>
        <dbReference type="ChEBI" id="CHEBI:29105"/>
        <note>catalytic</note>
    </ligand>
</feature>
<feature type="binding site" evidence="3">
    <location>
        <position position="212"/>
    </location>
    <ligand>
        <name>Zn(2+)</name>
        <dbReference type="ChEBI" id="CHEBI:29105"/>
        <note>catalytic</note>
    </ligand>
</feature>
<feature type="binding site" evidence="3">
    <location>
        <position position="218"/>
    </location>
    <ligand>
        <name>Zn(2+)</name>
        <dbReference type="ChEBI" id="CHEBI:29105"/>
        <note>catalytic</note>
    </ligand>
</feature>
<feature type="glycosylation site" description="N-linked (GlcNAc...) asparagine" evidence="2">
    <location>
        <position position="64"/>
    </location>
</feature>
<feature type="glycosylation site" description="N-linked (GlcNAc...) asparagine" evidence="2">
    <location>
        <position position="221"/>
    </location>
</feature>
<feature type="sequence variant" id="VAR_033489" description="In dbSNP:rs2499953." evidence="4 5">
    <original>K</original>
    <variation>E</variation>
    <location>
        <position position="43"/>
    </location>
</feature>
<feature type="sequence variant" id="VAR_033490" description="In dbSNP:rs16908114.">
    <original>I</original>
    <variation>M</variation>
    <location>
        <position position="260"/>
    </location>
</feature>
<feature type="sequence conflict" description="In Ref. 1; AAF80180." evidence="6" ref="1">
    <original>M</original>
    <variation>I</variation>
    <location>
        <position position="71"/>
    </location>
</feature>
<organism>
    <name type="scientific">Homo sapiens</name>
    <name type="common">Human</name>
    <dbReference type="NCBI Taxonomy" id="9606"/>
    <lineage>
        <taxon>Eukaryota</taxon>
        <taxon>Metazoa</taxon>
        <taxon>Chordata</taxon>
        <taxon>Craniata</taxon>
        <taxon>Vertebrata</taxon>
        <taxon>Euteleostomi</taxon>
        <taxon>Mammalia</taxon>
        <taxon>Eutheria</taxon>
        <taxon>Euarchontoglires</taxon>
        <taxon>Primates</taxon>
        <taxon>Haplorrhini</taxon>
        <taxon>Catarrhini</taxon>
        <taxon>Hominidae</taxon>
        <taxon>Homo</taxon>
    </lineage>
</organism>
<sequence>MQLVILRVTIFLPWCFAVPVPPAADHKGWDFVEGYFHQFFLTKKESPLLTQETQTQLLQQFHRNGTDLLDMQMHALLHQPHCGVPDGSDTSISPGRCKWNKHTLTYRIINYPHDMKPSAVKDSIYNAVSIWSNVTPLIFQQVQNGDADIKVSFWQWAHEDGWPFDGPGGILGHAFLPNSGNPGVVHFDKNEHWSASDTGYNLFLVATHEIGHSLGLQHSGNQSSIMYPTYWYHDPRTFQLSADDIQRIQHLYGEKCSSDIP</sequence>
<reference key="1">
    <citation type="journal article" date="2000" name="Eur. J. Biochem.">
        <title>Cloning of MMP-26 A novel matrilysin-like proteinase.</title>
        <authorList>
            <person name="Begnoit de Coignac A."/>
            <person name="Elson G.C.A."/>
            <person name="Delneste Y."/>
            <person name="Magistrelli G."/>
            <person name="Jeannin P."/>
            <person name="Aubry J.-P."/>
            <person name="Berthier O."/>
            <person name="Schmitt D."/>
            <person name="Bonnefoy J.-Y."/>
            <person name="Gauchat J.-F."/>
        </authorList>
    </citation>
    <scope>NUCLEOTIDE SEQUENCE [MRNA]</scope>
</reference>
<reference key="2">
    <citation type="journal article" date="2000" name="Cancer Res.">
        <title>Matrilysin-2, a new matrix metalloproteinase expressed in human tumors and showing the minimal domain organization required for secretion, latency, and activity.</title>
        <authorList>
            <person name="Uria J.A."/>
            <person name="Lopez-Otin C."/>
        </authorList>
    </citation>
    <scope>NUCLEOTIDE SEQUENCE [MRNA]</scope>
</reference>
<reference key="3">
    <citation type="journal article" date="2000" name="J. Biol. Chem.">
        <title>Identification and characterization of Homo sapiens endometase (matrix metalloproteinase-26) from endometrial tumor.</title>
        <authorList>
            <person name="Park H.I."/>
            <person name="Ni J."/>
            <person name="Gerkema F.E."/>
            <person name="Liu D."/>
            <person name="Belozerov V.E."/>
            <person name="Sang Q.-X.A."/>
        </authorList>
    </citation>
    <scope>NUCLEOTIDE SEQUENCE [MRNA]</scope>
    <scope>VARIANT GLU-43</scope>
</reference>
<reference key="4">
    <citation type="journal article" date="2001" name="Biochem. J.">
        <title>Characterization of matrix metalloproteinase-26, a novel metalloproteinase widely expressed in cancer cells of epithelial origin.</title>
        <authorList>
            <person name="Marchenko G.N."/>
            <person name="Ratnikov B.I."/>
            <person name="Rozanov D.V."/>
            <person name="Godzik A."/>
            <person name="Deryugina E.I."/>
            <person name="Strongin A.Y."/>
        </authorList>
    </citation>
    <scope>NUCLEOTIDE SEQUENCE [GENOMIC DNA]</scope>
    <scope>VARIANT GLU-43</scope>
    <source>
        <tissue>Kidney</tissue>
    </source>
</reference>
<reference key="5">
    <citation type="journal article" date="2004" name="Genome Res.">
        <title>The status, quality, and expansion of the NIH full-length cDNA project: the Mammalian Gene Collection (MGC).</title>
        <authorList>
            <consortium name="The MGC Project Team"/>
        </authorList>
    </citation>
    <scope>NUCLEOTIDE SEQUENCE [LARGE SCALE MRNA]</scope>
    <source>
        <tissue>Placenta</tissue>
    </source>
</reference>